<feature type="chain" id="PRO_1000011763" description="GTPase Der">
    <location>
        <begin position="1"/>
        <end position="436"/>
    </location>
</feature>
<feature type="domain" description="EngA-type G 1">
    <location>
        <begin position="4"/>
        <end position="167"/>
    </location>
</feature>
<feature type="domain" description="EngA-type G 2">
    <location>
        <begin position="175"/>
        <end position="351"/>
    </location>
</feature>
<feature type="domain" description="KH-like" evidence="1">
    <location>
        <begin position="352"/>
        <end position="436"/>
    </location>
</feature>
<feature type="binding site" evidence="1">
    <location>
        <begin position="10"/>
        <end position="17"/>
    </location>
    <ligand>
        <name>GTP</name>
        <dbReference type="ChEBI" id="CHEBI:37565"/>
        <label>1</label>
    </ligand>
</feature>
<feature type="binding site" evidence="1">
    <location>
        <begin position="57"/>
        <end position="61"/>
    </location>
    <ligand>
        <name>GTP</name>
        <dbReference type="ChEBI" id="CHEBI:37565"/>
        <label>1</label>
    </ligand>
</feature>
<feature type="binding site" evidence="1">
    <location>
        <begin position="119"/>
        <end position="122"/>
    </location>
    <ligand>
        <name>GTP</name>
        <dbReference type="ChEBI" id="CHEBI:37565"/>
        <label>1</label>
    </ligand>
</feature>
<feature type="binding site" evidence="1">
    <location>
        <begin position="181"/>
        <end position="188"/>
    </location>
    <ligand>
        <name>GTP</name>
        <dbReference type="ChEBI" id="CHEBI:37565"/>
        <label>2</label>
    </ligand>
</feature>
<feature type="binding site" evidence="1">
    <location>
        <begin position="229"/>
        <end position="233"/>
    </location>
    <ligand>
        <name>GTP</name>
        <dbReference type="ChEBI" id="CHEBI:37565"/>
        <label>2</label>
    </ligand>
</feature>
<feature type="binding site" evidence="1">
    <location>
        <begin position="294"/>
        <end position="297"/>
    </location>
    <ligand>
        <name>GTP</name>
        <dbReference type="ChEBI" id="CHEBI:37565"/>
        <label>2</label>
    </ligand>
</feature>
<gene>
    <name evidence="1" type="primary">der</name>
    <name type="synonym">engA</name>
    <name type="ordered locus">stu0322</name>
</gene>
<keyword id="KW-0342">GTP-binding</keyword>
<keyword id="KW-0547">Nucleotide-binding</keyword>
<keyword id="KW-1185">Reference proteome</keyword>
<keyword id="KW-0677">Repeat</keyword>
<keyword id="KW-0690">Ribosome biogenesis</keyword>
<sequence length="436" mass="48743">MTLPTVAIVGRPNVGKSTLFNRIAGERISIVEDVEGVTRDRIYTSAEWLNRQFSLIDTGGIDDVDAPFMEQIKHQAGIAMTEADVIVFVVSGKEGVTDADEYVARILYKTNKPVILAVNKVDNPEMRADIYDFYSLGLGDPYPVSSVHGIGTGDVLDAIVGNLPTEVEEENPDIIRFSLIGRPNVGKSSLINAILGEDRVIASPIAGTTRDAIDTNFVDSEGQEYTMIDTAGMRKSGKVYENTEKYSIMRSMRAIDRSDVVLMVINAEEGIREYDKRIAGFAHEAGKGIIIVVNKWDTIKKDNHTVANWEADIRDQFQFLSYAPIVFVSAKTKQRLNKLPEMIKRISESQNRRISSAVLNDVIMDAIAINPTPTDKGKRLKIFYGTQVSVKPPTFVIFVNEEELMHFSYMRFLENQIRQAFGFEGTPIHLIARKRK</sequence>
<organism>
    <name type="scientific">Streptococcus thermophilus (strain ATCC BAA-250 / LMG 18311)</name>
    <dbReference type="NCBI Taxonomy" id="264199"/>
    <lineage>
        <taxon>Bacteria</taxon>
        <taxon>Bacillati</taxon>
        <taxon>Bacillota</taxon>
        <taxon>Bacilli</taxon>
        <taxon>Lactobacillales</taxon>
        <taxon>Streptococcaceae</taxon>
        <taxon>Streptococcus</taxon>
    </lineage>
</organism>
<name>DER_STRT2</name>
<accession>Q5M5X5</accession>
<comment type="function">
    <text evidence="1">GTPase that plays an essential role in the late steps of ribosome biogenesis.</text>
</comment>
<comment type="subunit">
    <text evidence="1">Associates with the 50S ribosomal subunit.</text>
</comment>
<comment type="similarity">
    <text evidence="1">Belongs to the TRAFAC class TrmE-Era-EngA-EngB-Septin-like GTPase superfamily. EngA (Der) GTPase family.</text>
</comment>
<proteinExistence type="inferred from homology"/>
<dbReference type="EMBL" id="CP000023">
    <property type="protein sequence ID" value="AAV60044.1"/>
    <property type="molecule type" value="Genomic_DNA"/>
</dbReference>
<dbReference type="RefSeq" id="WP_011225483.1">
    <property type="nucleotide sequence ID" value="NC_006448.1"/>
</dbReference>
<dbReference type="SMR" id="Q5M5X5"/>
<dbReference type="STRING" id="264199.stu0322"/>
<dbReference type="GeneID" id="66898242"/>
<dbReference type="KEGG" id="stl:stu0322"/>
<dbReference type="PATRIC" id="fig|264199.4.peg.330"/>
<dbReference type="eggNOG" id="COG1160">
    <property type="taxonomic scope" value="Bacteria"/>
</dbReference>
<dbReference type="HOGENOM" id="CLU_016077_6_2_9"/>
<dbReference type="Proteomes" id="UP000001170">
    <property type="component" value="Chromosome"/>
</dbReference>
<dbReference type="GO" id="GO:0005525">
    <property type="term" value="F:GTP binding"/>
    <property type="evidence" value="ECO:0007669"/>
    <property type="project" value="UniProtKB-UniRule"/>
</dbReference>
<dbReference type="GO" id="GO:0043022">
    <property type="term" value="F:ribosome binding"/>
    <property type="evidence" value="ECO:0007669"/>
    <property type="project" value="TreeGrafter"/>
</dbReference>
<dbReference type="GO" id="GO:0042254">
    <property type="term" value="P:ribosome biogenesis"/>
    <property type="evidence" value="ECO:0007669"/>
    <property type="project" value="UniProtKB-KW"/>
</dbReference>
<dbReference type="CDD" id="cd01894">
    <property type="entry name" value="EngA1"/>
    <property type="match status" value="1"/>
</dbReference>
<dbReference type="CDD" id="cd01895">
    <property type="entry name" value="EngA2"/>
    <property type="match status" value="1"/>
</dbReference>
<dbReference type="FunFam" id="3.30.300.20:FF:000004">
    <property type="entry name" value="GTPase Der"/>
    <property type="match status" value="1"/>
</dbReference>
<dbReference type="FunFam" id="3.40.50.300:FF:000040">
    <property type="entry name" value="GTPase Der"/>
    <property type="match status" value="1"/>
</dbReference>
<dbReference type="FunFam" id="3.40.50.300:FF:000057">
    <property type="entry name" value="GTPase Der"/>
    <property type="match status" value="1"/>
</dbReference>
<dbReference type="Gene3D" id="3.30.300.20">
    <property type="match status" value="1"/>
</dbReference>
<dbReference type="Gene3D" id="3.40.50.300">
    <property type="entry name" value="P-loop containing nucleotide triphosphate hydrolases"/>
    <property type="match status" value="2"/>
</dbReference>
<dbReference type="HAMAP" id="MF_00195">
    <property type="entry name" value="GTPase_Der"/>
    <property type="match status" value="1"/>
</dbReference>
<dbReference type="InterPro" id="IPR031166">
    <property type="entry name" value="G_ENGA"/>
</dbReference>
<dbReference type="InterPro" id="IPR006073">
    <property type="entry name" value="GTP-bd"/>
</dbReference>
<dbReference type="InterPro" id="IPR016484">
    <property type="entry name" value="GTPase_Der"/>
</dbReference>
<dbReference type="InterPro" id="IPR032859">
    <property type="entry name" value="KH_dom-like"/>
</dbReference>
<dbReference type="InterPro" id="IPR015946">
    <property type="entry name" value="KH_dom-like_a/b"/>
</dbReference>
<dbReference type="InterPro" id="IPR027417">
    <property type="entry name" value="P-loop_NTPase"/>
</dbReference>
<dbReference type="InterPro" id="IPR005225">
    <property type="entry name" value="Small_GTP-bd"/>
</dbReference>
<dbReference type="NCBIfam" id="TIGR03594">
    <property type="entry name" value="GTPase_EngA"/>
    <property type="match status" value="1"/>
</dbReference>
<dbReference type="NCBIfam" id="TIGR00231">
    <property type="entry name" value="small_GTP"/>
    <property type="match status" value="2"/>
</dbReference>
<dbReference type="PANTHER" id="PTHR43834">
    <property type="entry name" value="GTPASE DER"/>
    <property type="match status" value="1"/>
</dbReference>
<dbReference type="PANTHER" id="PTHR43834:SF6">
    <property type="entry name" value="GTPASE DER"/>
    <property type="match status" value="1"/>
</dbReference>
<dbReference type="Pfam" id="PF14714">
    <property type="entry name" value="KH_dom-like"/>
    <property type="match status" value="1"/>
</dbReference>
<dbReference type="Pfam" id="PF01926">
    <property type="entry name" value="MMR_HSR1"/>
    <property type="match status" value="2"/>
</dbReference>
<dbReference type="PIRSF" id="PIRSF006485">
    <property type="entry name" value="GTP-binding_EngA"/>
    <property type="match status" value="1"/>
</dbReference>
<dbReference type="SUPFAM" id="SSF52540">
    <property type="entry name" value="P-loop containing nucleoside triphosphate hydrolases"/>
    <property type="match status" value="2"/>
</dbReference>
<dbReference type="PROSITE" id="PS51712">
    <property type="entry name" value="G_ENGA"/>
    <property type="match status" value="2"/>
</dbReference>
<reference key="1">
    <citation type="journal article" date="2004" name="Nat. Biotechnol.">
        <title>Complete sequence and comparative genome analysis of the dairy bacterium Streptococcus thermophilus.</title>
        <authorList>
            <person name="Bolotin A."/>
            <person name="Quinquis B."/>
            <person name="Renault P."/>
            <person name="Sorokin A."/>
            <person name="Ehrlich S.D."/>
            <person name="Kulakauskas S."/>
            <person name="Lapidus A."/>
            <person name="Goltsman E."/>
            <person name="Mazur M."/>
            <person name="Pusch G.D."/>
            <person name="Fonstein M."/>
            <person name="Overbeek R."/>
            <person name="Kyprides N."/>
            <person name="Purnelle B."/>
            <person name="Prozzi D."/>
            <person name="Ngui K."/>
            <person name="Masuy D."/>
            <person name="Hancy F."/>
            <person name="Burteau S."/>
            <person name="Boutry M."/>
            <person name="Delcour J."/>
            <person name="Goffeau A."/>
            <person name="Hols P."/>
        </authorList>
    </citation>
    <scope>NUCLEOTIDE SEQUENCE [LARGE SCALE GENOMIC DNA]</scope>
    <source>
        <strain>ATCC BAA-250 / LMG 18311</strain>
    </source>
</reference>
<evidence type="ECO:0000255" key="1">
    <source>
        <dbReference type="HAMAP-Rule" id="MF_00195"/>
    </source>
</evidence>
<protein>
    <recommendedName>
        <fullName evidence="1">GTPase Der</fullName>
    </recommendedName>
    <alternativeName>
        <fullName evidence="1">GTP-binding protein EngA</fullName>
    </alternativeName>
</protein>